<reference key="1">
    <citation type="submission" date="2008-06" db="EMBL/GenBank/DDBJ databases">
        <title>Complete sequence of Chloroherpeton thalassium ATCC 35110.</title>
        <authorList>
            <consortium name="US DOE Joint Genome Institute"/>
            <person name="Lucas S."/>
            <person name="Copeland A."/>
            <person name="Lapidus A."/>
            <person name="Glavina del Rio T."/>
            <person name="Dalin E."/>
            <person name="Tice H."/>
            <person name="Bruce D."/>
            <person name="Goodwin L."/>
            <person name="Pitluck S."/>
            <person name="Schmutz J."/>
            <person name="Larimer F."/>
            <person name="Land M."/>
            <person name="Hauser L."/>
            <person name="Kyrpides N."/>
            <person name="Mikhailova N."/>
            <person name="Liu Z."/>
            <person name="Li T."/>
            <person name="Zhao F."/>
            <person name="Overmann J."/>
            <person name="Bryant D.A."/>
            <person name="Richardson P."/>
        </authorList>
    </citation>
    <scope>NUCLEOTIDE SEQUENCE [LARGE SCALE GENOMIC DNA]</scope>
    <source>
        <strain>ATCC 35110 / GB-78</strain>
    </source>
</reference>
<feature type="chain" id="PRO_1000195539" description="Large ribosomal subunit protein uL10">
    <location>
        <begin position="1"/>
        <end position="173"/>
    </location>
</feature>
<evidence type="ECO:0000255" key="1">
    <source>
        <dbReference type="HAMAP-Rule" id="MF_00362"/>
    </source>
</evidence>
<evidence type="ECO:0000305" key="2"/>
<proteinExistence type="inferred from homology"/>
<sequence length="173" mass="18906">MNREEKSEIIQSVAEKLSKAQGVYLTEFSGLTVSEISDLRKQFREKDIEYKVVKNTLIKKALAHTKISDKLADGLKNTTAVAFGYDDPIAPAKIIKKYSDGNEKLKFKMASVDGTIFEAGQLDQLSNMLSKTENIGRIAGTINNVISGVPGTVNAVMRNLVSALEQIAKQKAA</sequence>
<dbReference type="EMBL" id="CP001100">
    <property type="protein sequence ID" value="ACF13640.1"/>
    <property type="molecule type" value="Genomic_DNA"/>
</dbReference>
<dbReference type="RefSeq" id="WP_012499724.1">
    <property type="nucleotide sequence ID" value="NC_011026.1"/>
</dbReference>
<dbReference type="SMR" id="B3QYL2"/>
<dbReference type="STRING" id="517418.Ctha_1176"/>
<dbReference type="KEGG" id="cts:Ctha_1176"/>
<dbReference type="eggNOG" id="COG0244">
    <property type="taxonomic scope" value="Bacteria"/>
</dbReference>
<dbReference type="HOGENOM" id="CLU_092227_3_0_10"/>
<dbReference type="OrthoDB" id="1523686at2"/>
<dbReference type="Proteomes" id="UP000001208">
    <property type="component" value="Chromosome"/>
</dbReference>
<dbReference type="GO" id="GO:0015934">
    <property type="term" value="C:large ribosomal subunit"/>
    <property type="evidence" value="ECO:0007669"/>
    <property type="project" value="InterPro"/>
</dbReference>
<dbReference type="GO" id="GO:0070180">
    <property type="term" value="F:large ribosomal subunit rRNA binding"/>
    <property type="evidence" value="ECO:0007669"/>
    <property type="project" value="UniProtKB-UniRule"/>
</dbReference>
<dbReference type="GO" id="GO:0003735">
    <property type="term" value="F:structural constituent of ribosome"/>
    <property type="evidence" value="ECO:0007669"/>
    <property type="project" value="InterPro"/>
</dbReference>
<dbReference type="GO" id="GO:0006412">
    <property type="term" value="P:translation"/>
    <property type="evidence" value="ECO:0007669"/>
    <property type="project" value="UniProtKB-UniRule"/>
</dbReference>
<dbReference type="CDD" id="cd05797">
    <property type="entry name" value="Ribosomal_L10"/>
    <property type="match status" value="1"/>
</dbReference>
<dbReference type="Gene3D" id="3.30.70.1730">
    <property type="match status" value="1"/>
</dbReference>
<dbReference type="Gene3D" id="6.10.250.290">
    <property type="match status" value="1"/>
</dbReference>
<dbReference type="HAMAP" id="MF_00362">
    <property type="entry name" value="Ribosomal_uL10"/>
    <property type="match status" value="1"/>
</dbReference>
<dbReference type="InterPro" id="IPR001790">
    <property type="entry name" value="Ribosomal_uL10"/>
</dbReference>
<dbReference type="InterPro" id="IPR043141">
    <property type="entry name" value="Ribosomal_uL10-like_sf"/>
</dbReference>
<dbReference type="InterPro" id="IPR022973">
    <property type="entry name" value="Ribosomal_uL10_bac"/>
</dbReference>
<dbReference type="InterPro" id="IPR047865">
    <property type="entry name" value="Ribosomal_uL10_bac_type"/>
</dbReference>
<dbReference type="InterPro" id="IPR002363">
    <property type="entry name" value="Ribosomal_uL10_CS_bac"/>
</dbReference>
<dbReference type="NCBIfam" id="NF000955">
    <property type="entry name" value="PRK00099.1-1"/>
    <property type="match status" value="1"/>
</dbReference>
<dbReference type="PANTHER" id="PTHR11560">
    <property type="entry name" value="39S RIBOSOMAL PROTEIN L10, MITOCHONDRIAL"/>
    <property type="match status" value="1"/>
</dbReference>
<dbReference type="Pfam" id="PF00466">
    <property type="entry name" value="Ribosomal_L10"/>
    <property type="match status" value="1"/>
</dbReference>
<dbReference type="SUPFAM" id="SSF160369">
    <property type="entry name" value="Ribosomal protein L10-like"/>
    <property type="match status" value="1"/>
</dbReference>
<dbReference type="PROSITE" id="PS01109">
    <property type="entry name" value="RIBOSOMAL_L10"/>
    <property type="match status" value="1"/>
</dbReference>
<accession>B3QYL2</accession>
<comment type="function">
    <text evidence="1">Forms part of the ribosomal stalk, playing a central role in the interaction of the ribosome with GTP-bound translation factors.</text>
</comment>
<comment type="subunit">
    <text evidence="1">Part of the ribosomal stalk of the 50S ribosomal subunit. The N-terminus interacts with L11 and the large rRNA to form the base of the stalk. The C-terminus forms an elongated spine to which L12 dimers bind in a sequential fashion forming a multimeric L10(L12)X complex.</text>
</comment>
<comment type="similarity">
    <text evidence="1">Belongs to the universal ribosomal protein uL10 family.</text>
</comment>
<gene>
    <name evidence="1" type="primary">rplJ</name>
    <name type="ordered locus">Ctha_1176</name>
</gene>
<protein>
    <recommendedName>
        <fullName evidence="1">Large ribosomal subunit protein uL10</fullName>
    </recommendedName>
    <alternativeName>
        <fullName evidence="2">50S ribosomal protein L10</fullName>
    </alternativeName>
</protein>
<name>RL10_CHLT3</name>
<organism>
    <name type="scientific">Chloroherpeton thalassium (strain ATCC 35110 / GB-78)</name>
    <dbReference type="NCBI Taxonomy" id="517418"/>
    <lineage>
        <taxon>Bacteria</taxon>
        <taxon>Pseudomonadati</taxon>
        <taxon>Chlorobiota</taxon>
        <taxon>Chlorobiia</taxon>
        <taxon>Chlorobiales</taxon>
        <taxon>Chloroherpetonaceae</taxon>
        <taxon>Chloroherpeton</taxon>
    </lineage>
</organism>
<keyword id="KW-1185">Reference proteome</keyword>
<keyword id="KW-0687">Ribonucleoprotein</keyword>
<keyword id="KW-0689">Ribosomal protein</keyword>
<keyword id="KW-0694">RNA-binding</keyword>
<keyword id="KW-0699">rRNA-binding</keyword>